<sequence length="264" mass="28545">MSNRWRFVVVVTLFTYCLTFERVSTWLIRSGEPVQHPAEFPFIAFLTTERTMCTGSLVSTRAVLTAGHCVCSPLPVIRVSFLTLRNGDQQGIHHQPSGVKVAPGYMPSCMSARQRRPIAQTLSGFDIAIVMLAQMVNLQSGIRVISLPQPSDIPPPGTGVFIVGYGRDDNDRDPSRKNGGILKKGRATIMECRHATNGNPICVKAGQNFGQLPAPGDSGGPLLPSLQGPVLGVVSHGVTLPNLPDIIVEYASVARMLDFVRSNI</sequence>
<comment type="function">
    <text>This protease cleaves elastin and thus facilitates penetration of schistosome parasite larvae through elastin-rich tissue of the host.</text>
</comment>
<comment type="activity regulation">
    <text>Activated by an autocatalytic mechanism.</text>
</comment>
<comment type="tissue specificity">
    <text>Acetabular (penetration) glands.</text>
</comment>
<comment type="similarity">
    <text evidence="3">Belongs to the peptidase S1 family.</text>
</comment>
<evidence type="ECO:0000250" key="1"/>
<evidence type="ECO:0000255" key="2"/>
<evidence type="ECO:0000255" key="3">
    <source>
        <dbReference type="PROSITE-ProRule" id="PRU00274"/>
    </source>
</evidence>
<reference key="1">
    <citation type="journal article" date="1988" name="J. Biol. Chem.">
        <title>Cloning of the proteinase that facilitates infection by schistosome parasites.</title>
        <authorList>
            <person name="Newport G.R."/>
            <person name="McKerrow J.H."/>
            <person name="Hedstrom R."/>
            <person name="Petitt M."/>
            <person name="McGarrigle L."/>
            <person name="Barr P.J."/>
            <person name="Agabian N."/>
        </authorList>
    </citation>
    <scope>NUCLEOTIDE SEQUENCE [MRNA]</scope>
</reference>
<keyword id="KW-1015">Disulfide bond</keyword>
<keyword id="KW-0378">Hydrolase</keyword>
<keyword id="KW-0645">Protease</keyword>
<keyword id="KW-1185">Reference proteome</keyword>
<keyword id="KW-0720">Serine protease</keyword>
<keyword id="KW-0732">Signal</keyword>
<keyword id="KW-0865">Zymogen</keyword>
<dbReference type="EC" id="3.4.21.-"/>
<dbReference type="EMBL" id="J03946">
    <property type="protein sequence ID" value="AAA29864.1"/>
    <property type="molecule type" value="mRNA"/>
</dbReference>
<dbReference type="PIR" id="A28942">
    <property type="entry name" value="A28942"/>
</dbReference>
<dbReference type="SMR" id="P12546"/>
<dbReference type="STRING" id="6183.P12546"/>
<dbReference type="MEROPS" id="S01.144"/>
<dbReference type="eggNOG" id="KOG3627">
    <property type="taxonomic scope" value="Eukaryota"/>
</dbReference>
<dbReference type="HOGENOM" id="CLU_1058926_0_0_1"/>
<dbReference type="InParanoid" id="P12546"/>
<dbReference type="Proteomes" id="UP000008854">
    <property type="component" value="Unassembled WGS sequence"/>
</dbReference>
<dbReference type="GO" id="GO:0004252">
    <property type="term" value="F:serine-type endopeptidase activity"/>
    <property type="evidence" value="ECO:0007669"/>
    <property type="project" value="InterPro"/>
</dbReference>
<dbReference type="GO" id="GO:0006508">
    <property type="term" value="P:proteolysis"/>
    <property type="evidence" value="ECO:0007669"/>
    <property type="project" value="UniProtKB-KW"/>
</dbReference>
<dbReference type="Gene3D" id="2.40.10.10">
    <property type="entry name" value="Trypsin-like serine proteases"/>
    <property type="match status" value="1"/>
</dbReference>
<dbReference type="InterPro" id="IPR009003">
    <property type="entry name" value="Peptidase_S1_PA"/>
</dbReference>
<dbReference type="InterPro" id="IPR043504">
    <property type="entry name" value="Peptidase_S1_PA_chymotrypsin"/>
</dbReference>
<dbReference type="InterPro" id="IPR001314">
    <property type="entry name" value="Peptidase_S1A"/>
</dbReference>
<dbReference type="InterPro" id="IPR051487">
    <property type="entry name" value="Ser/Thr_Proteases_Immune/Dev"/>
</dbReference>
<dbReference type="InterPro" id="IPR001254">
    <property type="entry name" value="Trypsin_dom"/>
</dbReference>
<dbReference type="InterPro" id="IPR018114">
    <property type="entry name" value="TRYPSIN_HIS"/>
</dbReference>
<dbReference type="PANTHER" id="PTHR24256">
    <property type="entry name" value="TRYPTASE-RELATED"/>
    <property type="match status" value="1"/>
</dbReference>
<dbReference type="Pfam" id="PF00089">
    <property type="entry name" value="Trypsin"/>
    <property type="match status" value="1"/>
</dbReference>
<dbReference type="PRINTS" id="PR00722">
    <property type="entry name" value="CHYMOTRYPSIN"/>
</dbReference>
<dbReference type="SMART" id="SM00020">
    <property type="entry name" value="Tryp_SPc"/>
    <property type="match status" value="1"/>
</dbReference>
<dbReference type="SUPFAM" id="SSF50494">
    <property type="entry name" value="Trypsin-like serine proteases"/>
    <property type="match status" value="1"/>
</dbReference>
<dbReference type="PROSITE" id="PS50240">
    <property type="entry name" value="TRYPSIN_DOM"/>
    <property type="match status" value="1"/>
</dbReference>
<dbReference type="PROSITE" id="PS00134">
    <property type="entry name" value="TRYPSIN_HIS"/>
    <property type="match status" value="1"/>
</dbReference>
<name>CERC_SCHMA</name>
<proteinExistence type="evidence at transcript level"/>
<organism>
    <name type="scientific">Schistosoma mansoni</name>
    <name type="common">Blood fluke</name>
    <dbReference type="NCBI Taxonomy" id="6183"/>
    <lineage>
        <taxon>Eukaryota</taxon>
        <taxon>Metazoa</taxon>
        <taxon>Spiralia</taxon>
        <taxon>Lophotrochozoa</taxon>
        <taxon>Platyhelminthes</taxon>
        <taxon>Trematoda</taxon>
        <taxon>Digenea</taxon>
        <taxon>Strigeidida</taxon>
        <taxon>Schistosomatoidea</taxon>
        <taxon>Schistosomatidae</taxon>
        <taxon>Schistosoma</taxon>
    </lineage>
</organism>
<accession>P12546</accession>
<feature type="signal peptide" evidence="2">
    <location>
        <begin position="1"/>
        <end position="19"/>
    </location>
</feature>
<feature type="propeptide" id="PRO_0000028440" evidence="2">
    <location>
        <begin position="20"/>
        <end position="27"/>
    </location>
</feature>
<feature type="chain" id="PRO_0000028441" description="Cercarial protease">
    <location>
        <begin position="28"/>
        <end position="264"/>
    </location>
</feature>
<feature type="domain" description="Peptidase S1" evidence="3">
    <location>
        <begin position="28"/>
        <end position="264"/>
    </location>
</feature>
<feature type="active site" description="Charge relay system" evidence="1">
    <location>
        <position position="68"/>
    </location>
</feature>
<feature type="active site" description="Charge relay system" evidence="1">
    <location>
        <position position="126"/>
    </location>
</feature>
<feature type="active site" description="Charge relay system" evidence="1">
    <location>
        <position position="218"/>
    </location>
</feature>
<feature type="disulfide bond" evidence="3">
    <location>
        <begin position="53"/>
        <end position="69"/>
    </location>
</feature>
<feature type="disulfide bond" evidence="3">
    <location>
        <begin position="192"/>
        <end position="202"/>
    </location>
</feature>
<protein>
    <recommendedName>
        <fullName>Cercarial protease</fullName>
        <ecNumber>3.4.21.-</ecNumber>
    </recommendedName>
    <alternativeName>
        <fullName>Cercarial elastase</fullName>
    </alternativeName>
</protein>